<feature type="chain" id="PRO_1000143543" description="ATP synthase subunit beta">
    <location>
        <begin position="1"/>
        <end position="460"/>
    </location>
</feature>
<feature type="binding site" evidence="1">
    <location>
        <begin position="150"/>
        <end position="157"/>
    </location>
    <ligand>
        <name>ATP</name>
        <dbReference type="ChEBI" id="CHEBI:30616"/>
    </ligand>
</feature>
<protein>
    <recommendedName>
        <fullName evidence="1">ATP synthase subunit beta</fullName>
        <ecNumber evidence="1">7.1.2.2</ecNumber>
    </recommendedName>
    <alternativeName>
        <fullName evidence="1">ATP synthase F1 sector subunit beta</fullName>
    </alternativeName>
    <alternativeName>
        <fullName evidence="1">F-ATPase subunit beta</fullName>
    </alternativeName>
</protein>
<keyword id="KW-0066">ATP synthesis</keyword>
<keyword id="KW-0067">ATP-binding</keyword>
<keyword id="KW-0997">Cell inner membrane</keyword>
<keyword id="KW-1003">Cell membrane</keyword>
<keyword id="KW-0139">CF(1)</keyword>
<keyword id="KW-0375">Hydrogen ion transport</keyword>
<keyword id="KW-0406">Ion transport</keyword>
<keyword id="KW-0472">Membrane</keyword>
<keyword id="KW-0547">Nucleotide-binding</keyword>
<keyword id="KW-1278">Translocase</keyword>
<keyword id="KW-0813">Transport</keyword>
<reference key="1">
    <citation type="journal article" date="2009" name="BMC Genomics">
        <title>Pseudogene accumulation in the evolutionary histories of Salmonella enterica serovars Paratyphi A and Typhi.</title>
        <authorList>
            <person name="Holt K.E."/>
            <person name="Thomson N.R."/>
            <person name="Wain J."/>
            <person name="Langridge G.C."/>
            <person name="Hasan R."/>
            <person name="Bhutta Z.A."/>
            <person name="Quail M.A."/>
            <person name="Norbertczak H."/>
            <person name="Walker D."/>
            <person name="Simmonds M."/>
            <person name="White B."/>
            <person name="Bason N."/>
            <person name="Mungall K."/>
            <person name="Dougan G."/>
            <person name="Parkhill J."/>
        </authorList>
    </citation>
    <scope>NUCLEOTIDE SEQUENCE [LARGE SCALE GENOMIC DNA]</scope>
    <source>
        <strain>AKU_12601</strain>
    </source>
</reference>
<proteinExistence type="inferred from homology"/>
<dbReference type="EC" id="7.1.2.2" evidence="1"/>
<dbReference type="EMBL" id="FM200053">
    <property type="protein sequence ID" value="CAR61734.1"/>
    <property type="molecule type" value="Genomic_DNA"/>
</dbReference>
<dbReference type="RefSeq" id="WP_000190495.1">
    <property type="nucleotide sequence ID" value="NC_011147.1"/>
</dbReference>
<dbReference type="SMR" id="B5BIN6"/>
<dbReference type="KEGG" id="sek:SSPA3459"/>
<dbReference type="HOGENOM" id="CLU_022398_0_2_6"/>
<dbReference type="Proteomes" id="UP000001869">
    <property type="component" value="Chromosome"/>
</dbReference>
<dbReference type="GO" id="GO:0005886">
    <property type="term" value="C:plasma membrane"/>
    <property type="evidence" value="ECO:0007669"/>
    <property type="project" value="UniProtKB-SubCell"/>
</dbReference>
<dbReference type="GO" id="GO:0045259">
    <property type="term" value="C:proton-transporting ATP synthase complex"/>
    <property type="evidence" value="ECO:0007669"/>
    <property type="project" value="UniProtKB-KW"/>
</dbReference>
<dbReference type="GO" id="GO:0005524">
    <property type="term" value="F:ATP binding"/>
    <property type="evidence" value="ECO:0007669"/>
    <property type="project" value="UniProtKB-UniRule"/>
</dbReference>
<dbReference type="GO" id="GO:0016887">
    <property type="term" value="F:ATP hydrolysis activity"/>
    <property type="evidence" value="ECO:0007669"/>
    <property type="project" value="InterPro"/>
</dbReference>
<dbReference type="GO" id="GO:0046933">
    <property type="term" value="F:proton-transporting ATP synthase activity, rotational mechanism"/>
    <property type="evidence" value="ECO:0007669"/>
    <property type="project" value="UniProtKB-UniRule"/>
</dbReference>
<dbReference type="CDD" id="cd18110">
    <property type="entry name" value="ATP-synt_F1_beta_C"/>
    <property type="match status" value="1"/>
</dbReference>
<dbReference type="CDD" id="cd18115">
    <property type="entry name" value="ATP-synt_F1_beta_N"/>
    <property type="match status" value="1"/>
</dbReference>
<dbReference type="CDD" id="cd01133">
    <property type="entry name" value="F1-ATPase_beta_CD"/>
    <property type="match status" value="1"/>
</dbReference>
<dbReference type="FunFam" id="1.10.1140.10:FF:000001">
    <property type="entry name" value="ATP synthase subunit beta"/>
    <property type="match status" value="1"/>
</dbReference>
<dbReference type="FunFam" id="2.40.10.170:FF:000003">
    <property type="entry name" value="ATP synthase subunit beta"/>
    <property type="match status" value="1"/>
</dbReference>
<dbReference type="FunFam" id="3.40.50.300:FF:000004">
    <property type="entry name" value="ATP synthase subunit beta"/>
    <property type="match status" value="1"/>
</dbReference>
<dbReference type="Gene3D" id="2.40.10.170">
    <property type="match status" value="1"/>
</dbReference>
<dbReference type="Gene3D" id="1.10.1140.10">
    <property type="entry name" value="Bovine Mitochondrial F1-atpase, Atp Synthase Beta Chain, Chain D, domain 3"/>
    <property type="match status" value="1"/>
</dbReference>
<dbReference type="Gene3D" id="3.40.50.300">
    <property type="entry name" value="P-loop containing nucleotide triphosphate hydrolases"/>
    <property type="match status" value="1"/>
</dbReference>
<dbReference type="HAMAP" id="MF_01347">
    <property type="entry name" value="ATP_synth_beta_bact"/>
    <property type="match status" value="1"/>
</dbReference>
<dbReference type="InterPro" id="IPR003593">
    <property type="entry name" value="AAA+_ATPase"/>
</dbReference>
<dbReference type="InterPro" id="IPR055190">
    <property type="entry name" value="ATP-synt_VA_C"/>
</dbReference>
<dbReference type="InterPro" id="IPR005722">
    <property type="entry name" value="ATP_synth_F1_bsu"/>
</dbReference>
<dbReference type="InterPro" id="IPR020003">
    <property type="entry name" value="ATPase_a/bsu_AS"/>
</dbReference>
<dbReference type="InterPro" id="IPR050053">
    <property type="entry name" value="ATPase_alpha/beta_chains"/>
</dbReference>
<dbReference type="InterPro" id="IPR004100">
    <property type="entry name" value="ATPase_F1/V1/A1_a/bsu_N"/>
</dbReference>
<dbReference type="InterPro" id="IPR036121">
    <property type="entry name" value="ATPase_F1/V1/A1_a/bsu_N_sf"/>
</dbReference>
<dbReference type="InterPro" id="IPR000194">
    <property type="entry name" value="ATPase_F1/V1/A1_a/bsu_nucl-bd"/>
</dbReference>
<dbReference type="InterPro" id="IPR024034">
    <property type="entry name" value="ATPase_F1/V1_b/a_C"/>
</dbReference>
<dbReference type="InterPro" id="IPR027417">
    <property type="entry name" value="P-loop_NTPase"/>
</dbReference>
<dbReference type="NCBIfam" id="TIGR01039">
    <property type="entry name" value="atpD"/>
    <property type="match status" value="1"/>
</dbReference>
<dbReference type="PANTHER" id="PTHR15184">
    <property type="entry name" value="ATP SYNTHASE"/>
    <property type="match status" value="1"/>
</dbReference>
<dbReference type="PANTHER" id="PTHR15184:SF71">
    <property type="entry name" value="ATP SYNTHASE SUBUNIT BETA, MITOCHONDRIAL"/>
    <property type="match status" value="1"/>
</dbReference>
<dbReference type="Pfam" id="PF00006">
    <property type="entry name" value="ATP-synt_ab"/>
    <property type="match status" value="1"/>
</dbReference>
<dbReference type="Pfam" id="PF02874">
    <property type="entry name" value="ATP-synt_ab_N"/>
    <property type="match status" value="1"/>
</dbReference>
<dbReference type="Pfam" id="PF22919">
    <property type="entry name" value="ATP-synt_VA_C"/>
    <property type="match status" value="1"/>
</dbReference>
<dbReference type="SMART" id="SM00382">
    <property type="entry name" value="AAA"/>
    <property type="match status" value="1"/>
</dbReference>
<dbReference type="SUPFAM" id="SSF47917">
    <property type="entry name" value="C-terminal domain of alpha and beta subunits of F1 ATP synthase"/>
    <property type="match status" value="1"/>
</dbReference>
<dbReference type="SUPFAM" id="SSF50615">
    <property type="entry name" value="N-terminal domain of alpha and beta subunits of F1 ATP synthase"/>
    <property type="match status" value="1"/>
</dbReference>
<dbReference type="SUPFAM" id="SSF52540">
    <property type="entry name" value="P-loop containing nucleoside triphosphate hydrolases"/>
    <property type="match status" value="1"/>
</dbReference>
<dbReference type="PROSITE" id="PS00152">
    <property type="entry name" value="ATPASE_ALPHA_BETA"/>
    <property type="match status" value="1"/>
</dbReference>
<comment type="function">
    <text evidence="1">Produces ATP from ADP in the presence of a proton gradient across the membrane. The catalytic sites are hosted primarily by the beta subunits.</text>
</comment>
<comment type="catalytic activity">
    <reaction evidence="1">
        <text>ATP + H2O + 4 H(+)(in) = ADP + phosphate + 5 H(+)(out)</text>
        <dbReference type="Rhea" id="RHEA:57720"/>
        <dbReference type="ChEBI" id="CHEBI:15377"/>
        <dbReference type="ChEBI" id="CHEBI:15378"/>
        <dbReference type="ChEBI" id="CHEBI:30616"/>
        <dbReference type="ChEBI" id="CHEBI:43474"/>
        <dbReference type="ChEBI" id="CHEBI:456216"/>
        <dbReference type="EC" id="7.1.2.2"/>
    </reaction>
</comment>
<comment type="subunit">
    <text evidence="1">F-type ATPases have 2 components, CF(1) - the catalytic core - and CF(0) - the membrane proton channel. CF(1) has five subunits: alpha(3), beta(3), gamma(1), delta(1), epsilon(1). CF(0) has three main subunits: a(1), b(2) and c(9-12). The alpha and beta chains form an alternating ring which encloses part of the gamma chain. CF(1) is attached to CF(0) by a central stalk formed by the gamma and epsilon chains, while a peripheral stalk is formed by the delta and b chains.</text>
</comment>
<comment type="subcellular location">
    <subcellularLocation>
        <location evidence="1">Cell inner membrane</location>
        <topology evidence="1">Peripheral membrane protein</topology>
    </subcellularLocation>
</comment>
<comment type="similarity">
    <text evidence="1">Belongs to the ATPase alpha/beta chains family.</text>
</comment>
<sequence length="460" mass="50269">MATGKIVQVIGAVVDVDFPQDAVPRVYDALEVQNGNEKLVLEVQQQLGGGIVRTIAMGSSDGLRRGLDVKDLEHPIEVPVGKATLGRIMNVLGEPVDMKGEIGEEERWAIHRAAPSYEELSNSQELLETGIKVIDLMCPFAKGGKVGLFGGAGVGKTVNMMELIRNIAIEHSGYSVFAGVGERTREGNDFYHEMTDSNVIDKVSLVYGQMNEPPGNRLRVALTGLTMAEKFRDEGRDVLLFVDNIYRYTLAGTEVSALLGRMPSAVGYQPTLAEEMGVLQERITSTKTGSITSVQAVYVPADDLTDPSPATTFAHLDATVVLSRQIASLGIYPAVDPLDSTSRQLDPLVVGQEHYDTARGVQSILQRYQELKDIIAILGMDELSEEDKLVVARARKIQRFLSQPFFVAEVFTGSPGKYVSLKDTIRGFKGIMEGEYDHLPEQAFYMVGSIDEAVEKAKKL</sequence>
<gene>
    <name evidence="1" type="primary">atpD</name>
    <name type="ordered locus">SSPA3459</name>
</gene>
<name>ATPB_SALPK</name>
<evidence type="ECO:0000255" key="1">
    <source>
        <dbReference type="HAMAP-Rule" id="MF_01347"/>
    </source>
</evidence>
<accession>B5BIN6</accession>
<organism>
    <name type="scientific">Salmonella paratyphi A (strain AKU_12601)</name>
    <dbReference type="NCBI Taxonomy" id="554290"/>
    <lineage>
        <taxon>Bacteria</taxon>
        <taxon>Pseudomonadati</taxon>
        <taxon>Pseudomonadota</taxon>
        <taxon>Gammaproteobacteria</taxon>
        <taxon>Enterobacterales</taxon>
        <taxon>Enterobacteriaceae</taxon>
        <taxon>Salmonella</taxon>
    </lineage>
</organism>